<organism>
    <name type="scientific">Dictyostelium discoideum</name>
    <name type="common">Social amoeba</name>
    <dbReference type="NCBI Taxonomy" id="44689"/>
    <lineage>
        <taxon>Eukaryota</taxon>
        <taxon>Amoebozoa</taxon>
        <taxon>Evosea</taxon>
        <taxon>Eumycetozoa</taxon>
        <taxon>Dictyostelia</taxon>
        <taxon>Dictyosteliales</taxon>
        <taxon>Dictyosteliaceae</taxon>
        <taxon>Dictyostelium</taxon>
    </lineage>
</organism>
<sequence length="368" mass="42885">MEIDIEKLPIIDISSFQNNENDKNQVAKEINKACKEYGFFYIKNHGVDQELIENLQNVIKKFFSLPLEIKMKWKMGLTNREWLGFFKVGQEITYGQVDWKEGCYYSSEMDGDINTIHNVPLYPTAEQEEQYEIQGFKSTIHTYIEKLTHLSQQIIEAISLSLNLPQDYFFKNYTYDPFILMGLLHYPSFHHQEQEEEQEDDESNNGGKKSPNPDESKKPEVEKFGTGQHTDWGLLTVLYQDDVGGLQVKSKNSEEYIDAPPIPGTFICNIGDMLDKMTGGYYLSNLHRVKYNKSGRDRFSIPFFLDPSLNSIPKLIPNYDQLSQFADKPERWDKQNIHEFDGTYGQYFIKKIGRVFPDYVYKKSGELV</sequence>
<gene>
    <name type="primary">aco</name>
    <name type="ORF">DDB_G0277497</name>
</gene>
<protein>
    <recommendedName>
        <fullName>1-aminocyclopropane-1-carboxylate oxidase</fullName>
        <shortName>ACC oxidase</shortName>
        <shortName>Ddaco</shortName>
        <ecNumber>1.14.17.4</ecNumber>
    </recommendedName>
    <alternativeName>
        <fullName>Ethylene-forming enzyme</fullName>
        <shortName>EFE</shortName>
    </alternativeName>
</protein>
<name>ACCO1_DICDI</name>
<reference key="1">
    <citation type="journal article" date="2007" name="Exp. Cell Res.">
        <title>Ethylene induces zygote formation through an enhanced expression of zyg1 in Dictyostelium mucoroides.</title>
        <authorList>
            <person name="Amagai A."/>
            <person name="Soramoto S."/>
            <person name="Saito S."/>
            <person name="Maeda Y."/>
        </authorList>
    </citation>
    <scope>NUCLEOTIDE SEQUENCE [MRNA]</scope>
    <scope>FUNCTION</scope>
</reference>
<reference key="2">
    <citation type="journal article" date="2002" name="Nature">
        <title>Sequence and analysis of chromosome 2 of Dictyostelium discoideum.</title>
        <authorList>
            <person name="Gloeckner G."/>
            <person name="Eichinger L."/>
            <person name="Szafranski K."/>
            <person name="Pachebat J.A."/>
            <person name="Bankier A.T."/>
            <person name="Dear P.H."/>
            <person name="Lehmann R."/>
            <person name="Baumgart C."/>
            <person name="Parra G."/>
            <person name="Abril J.F."/>
            <person name="Guigo R."/>
            <person name="Kumpf K."/>
            <person name="Tunggal B."/>
            <person name="Cox E.C."/>
            <person name="Quail M.A."/>
            <person name="Platzer M."/>
            <person name="Rosenthal A."/>
            <person name="Noegel A.A."/>
        </authorList>
    </citation>
    <scope>NUCLEOTIDE SEQUENCE [LARGE SCALE GENOMIC DNA]</scope>
    <source>
        <strain>AX4</strain>
    </source>
</reference>
<reference key="3">
    <citation type="journal article" date="2005" name="Nature">
        <title>The genome of the social amoeba Dictyostelium discoideum.</title>
        <authorList>
            <person name="Eichinger L."/>
            <person name="Pachebat J.A."/>
            <person name="Gloeckner G."/>
            <person name="Rajandream M.A."/>
            <person name="Sucgang R."/>
            <person name="Berriman M."/>
            <person name="Song J."/>
            <person name="Olsen R."/>
            <person name="Szafranski K."/>
            <person name="Xu Q."/>
            <person name="Tunggal B."/>
            <person name="Kummerfeld S."/>
            <person name="Madera M."/>
            <person name="Konfortov B.A."/>
            <person name="Rivero F."/>
            <person name="Bankier A.T."/>
            <person name="Lehmann R."/>
            <person name="Hamlin N."/>
            <person name="Davies R."/>
            <person name="Gaudet P."/>
            <person name="Fey P."/>
            <person name="Pilcher K."/>
            <person name="Chen G."/>
            <person name="Saunders D."/>
            <person name="Sodergren E.J."/>
            <person name="Davis P."/>
            <person name="Kerhornou A."/>
            <person name="Nie X."/>
            <person name="Hall N."/>
            <person name="Anjard C."/>
            <person name="Hemphill L."/>
            <person name="Bason N."/>
            <person name="Farbrother P."/>
            <person name="Desany B."/>
            <person name="Just E."/>
            <person name="Morio T."/>
            <person name="Rost R."/>
            <person name="Churcher C.M."/>
            <person name="Cooper J."/>
            <person name="Haydock S."/>
            <person name="van Driessche N."/>
            <person name="Cronin A."/>
            <person name="Goodhead I."/>
            <person name="Muzny D.M."/>
            <person name="Mourier T."/>
            <person name="Pain A."/>
            <person name="Lu M."/>
            <person name="Harper D."/>
            <person name="Lindsay R."/>
            <person name="Hauser H."/>
            <person name="James K.D."/>
            <person name="Quiles M."/>
            <person name="Madan Babu M."/>
            <person name="Saito T."/>
            <person name="Buchrieser C."/>
            <person name="Wardroper A."/>
            <person name="Felder M."/>
            <person name="Thangavelu M."/>
            <person name="Johnson D."/>
            <person name="Knights A."/>
            <person name="Loulseged H."/>
            <person name="Mungall K.L."/>
            <person name="Oliver K."/>
            <person name="Price C."/>
            <person name="Quail M.A."/>
            <person name="Urushihara H."/>
            <person name="Hernandez J."/>
            <person name="Rabbinowitsch E."/>
            <person name="Steffen D."/>
            <person name="Sanders M."/>
            <person name="Ma J."/>
            <person name="Kohara Y."/>
            <person name="Sharp S."/>
            <person name="Simmonds M.N."/>
            <person name="Spiegler S."/>
            <person name="Tivey A."/>
            <person name="Sugano S."/>
            <person name="White B."/>
            <person name="Walker D."/>
            <person name="Woodward J.R."/>
            <person name="Winckler T."/>
            <person name="Tanaka Y."/>
            <person name="Shaulsky G."/>
            <person name="Schleicher M."/>
            <person name="Weinstock G.M."/>
            <person name="Rosenthal A."/>
            <person name="Cox E.C."/>
            <person name="Chisholm R.L."/>
            <person name="Gibbs R.A."/>
            <person name="Loomis W.F."/>
            <person name="Platzer M."/>
            <person name="Kay R.R."/>
            <person name="Williams J.G."/>
            <person name="Dear P.H."/>
            <person name="Noegel A.A."/>
            <person name="Barrell B.G."/>
            <person name="Kuspa A."/>
        </authorList>
    </citation>
    <scope>NUCLEOTIDE SEQUENCE [LARGE SCALE GENOMIC DNA]</scope>
    <source>
        <strain>AX4</strain>
    </source>
</reference>
<keyword id="KW-0223">Dioxygenase</keyword>
<keyword id="KW-0266">Ethylene biosynthesis</keyword>
<keyword id="KW-0408">Iron</keyword>
<keyword id="KW-0479">Metal-binding</keyword>
<keyword id="KW-0560">Oxidoreductase</keyword>
<keyword id="KW-1185">Reference proteome</keyword>
<feature type="chain" id="PRO_0000392075" description="1-aminocyclopropane-1-carboxylate oxidase">
    <location>
        <begin position="1"/>
        <end position="368"/>
    </location>
</feature>
<feature type="domain" description="Fe2OG dioxygenase" evidence="1">
    <location>
        <begin position="177"/>
        <end position="307"/>
    </location>
</feature>
<feature type="region of interest" description="Disordered" evidence="2">
    <location>
        <begin position="191"/>
        <end position="226"/>
    </location>
</feature>
<feature type="compositionally biased region" description="Acidic residues" evidence="2">
    <location>
        <begin position="194"/>
        <end position="203"/>
    </location>
</feature>
<feature type="compositionally biased region" description="Basic and acidic residues" evidence="2">
    <location>
        <begin position="211"/>
        <end position="223"/>
    </location>
</feature>
<feature type="binding site" evidence="1">
    <location>
        <position position="229"/>
    </location>
    <ligand>
        <name>Fe cation</name>
        <dbReference type="ChEBI" id="CHEBI:24875"/>
    </ligand>
</feature>
<feature type="binding site" evidence="1">
    <location>
        <position position="231"/>
    </location>
    <ligand>
        <name>Fe cation</name>
        <dbReference type="ChEBI" id="CHEBI:24875"/>
    </ligand>
</feature>
<feature type="binding site" evidence="1">
    <location>
        <position position="287"/>
    </location>
    <ligand>
        <name>Fe cation</name>
        <dbReference type="ChEBI" id="CHEBI:24875"/>
    </ligand>
</feature>
<feature type="binding site" evidence="1">
    <location>
        <position position="298"/>
    </location>
    <ligand>
        <name>2-oxoglutarate</name>
        <dbReference type="ChEBI" id="CHEBI:16810"/>
    </ligand>
</feature>
<evidence type="ECO:0000255" key="1">
    <source>
        <dbReference type="PROSITE-ProRule" id="PRU00805"/>
    </source>
</evidence>
<evidence type="ECO:0000256" key="2">
    <source>
        <dbReference type="SAM" id="MobiDB-lite"/>
    </source>
</evidence>
<evidence type="ECO:0000269" key="3">
    <source>
    </source>
</evidence>
<evidence type="ECO:0000305" key="4"/>
<dbReference type="EC" id="1.14.17.4"/>
<dbReference type="EMBL" id="AB105858">
    <property type="protein sequence ID" value="BAD13533.1"/>
    <property type="molecule type" value="mRNA"/>
</dbReference>
<dbReference type="EMBL" id="AAFI02000020">
    <property type="protein sequence ID" value="EAL68711.1"/>
    <property type="molecule type" value="Genomic_DNA"/>
</dbReference>
<dbReference type="SMR" id="Q76NT9"/>
<dbReference type="FunCoup" id="Q76NT9">
    <property type="interactions" value="2"/>
</dbReference>
<dbReference type="STRING" id="44689.Q76NT9"/>
<dbReference type="PaxDb" id="44689-DDB0231161"/>
<dbReference type="EnsemblProtists" id="EAL68711">
    <property type="protein sequence ID" value="EAL68711"/>
    <property type="gene ID" value="DDB_G0277497"/>
</dbReference>
<dbReference type="KEGG" id="ddi:DDB_G0277497"/>
<dbReference type="dictyBase" id="DDB_G0277497">
    <property type="gene designation" value="aco"/>
</dbReference>
<dbReference type="VEuPathDB" id="AmoebaDB:DDB_G0277497"/>
<dbReference type="eggNOG" id="KOG0143">
    <property type="taxonomic scope" value="Eukaryota"/>
</dbReference>
<dbReference type="HOGENOM" id="CLU_010119_6_3_1"/>
<dbReference type="InParanoid" id="Q76NT9"/>
<dbReference type="OMA" id="WLGFFKV"/>
<dbReference type="PhylomeDB" id="Q76NT9"/>
<dbReference type="UniPathway" id="UPA00384">
    <property type="reaction ID" value="UER00563"/>
</dbReference>
<dbReference type="PRO" id="PR:Q76NT9"/>
<dbReference type="Proteomes" id="UP000002195">
    <property type="component" value="Chromosome 2"/>
</dbReference>
<dbReference type="GO" id="GO:0009815">
    <property type="term" value="F:1-aminocyclopropane-1-carboxylate oxidase activity"/>
    <property type="evidence" value="ECO:0007669"/>
    <property type="project" value="UniProtKB-EC"/>
</dbReference>
<dbReference type="GO" id="GO:0016706">
    <property type="term" value="F:2-oxoglutarate-dependent dioxygenase activity"/>
    <property type="evidence" value="ECO:0000318"/>
    <property type="project" value="GO_Central"/>
</dbReference>
<dbReference type="GO" id="GO:0046872">
    <property type="term" value="F:metal ion binding"/>
    <property type="evidence" value="ECO:0007669"/>
    <property type="project" value="UniProtKB-KW"/>
</dbReference>
<dbReference type="GO" id="GO:0009693">
    <property type="term" value="P:ethylene biosynthetic process"/>
    <property type="evidence" value="ECO:0000316"/>
    <property type="project" value="dictyBase"/>
</dbReference>
<dbReference type="FunFam" id="2.60.120.330:FF:000049">
    <property type="entry name" value="Probable iron/ascorbate oxidoreductase"/>
    <property type="match status" value="1"/>
</dbReference>
<dbReference type="Gene3D" id="2.60.120.330">
    <property type="entry name" value="B-lactam Antibiotic, Isopenicillin N Synthase, Chain"/>
    <property type="match status" value="1"/>
</dbReference>
<dbReference type="InterPro" id="IPR026992">
    <property type="entry name" value="DIOX_N"/>
</dbReference>
<dbReference type="InterPro" id="IPR044861">
    <property type="entry name" value="IPNS-like_FE2OG_OXY"/>
</dbReference>
<dbReference type="InterPro" id="IPR027443">
    <property type="entry name" value="IPNS-like_sf"/>
</dbReference>
<dbReference type="InterPro" id="IPR050231">
    <property type="entry name" value="Iron_ascorbate_oxido_reductase"/>
</dbReference>
<dbReference type="InterPro" id="IPR005123">
    <property type="entry name" value="Oxoglu/Fe-dep_dioxygenase_dom"/>
</dbReference>
<dbReference type="PANTHER" id="PTHR47990">
    <property type="entry name" value="2-OXOGLUTARATE (2OG) AND FE(II)-DEPENDENT OXYGENASE SUPERFAMILY PROTEIN-RELATED"/>
    <property type="match status" value="1"/>
</dbReference>
<dbReference type="Pfam" id="PF03171">
    <property type="entry name" value="2OG-FeII_Oxy"/>
    <property type="match status" value="1"/>
</dbReference>
<dbReference type="Pfam" id="PF14226">
    <property type="entry name" value="DIOX_N"/>
    <property type="match status" value="1"/>
</dbReference>
<dbReference type="PRINTS" id="PR00682">
    <property type="entry name" value="IPNSYNTHASE"/>
</dbReference>
<dbReference type="SUPFAM" id="SSF51197">
    <property type="entry name" value="Clavaminate synthase-like"/>
    <property type="match status" value="1"/>
</dbReference>
<dbReference type="PROSITE" id="PS51471">
    <property type="entry name" value="FE2OG_OXY"/>
    <property type="match status" value="1"/>
</dbReference>
<proteinExistence type="evidence at transcript level"/>
<comment type="function">
    <text evidence="3">Involved in ethylene biosynthesis. Overexpression induces overproduction of ethylene.</text>
</comment>
<comment type="catalytic activity">
    <reaction>
        <text>1-aminocyclopropane-1-carboxylate + L-ascorbate + O2 = ethene + L-dehydroascorbate + hydrogen cyanide + CO2 + 2 H2O</text>
        <dbReference type="Rhea" id="RHEA:23640"/>
        <dbReference type="ChEBI" id="CHEBI:15377"/>
        <dbReference type="ChEBI" id="CHEBI:15379"/>
        <dbReference type="ChEBI" id="CHEBI:16526"/>
        <dbReference type="ChEBI" id="CHEBI:18153"/>
        <dbReference type="ChEBI" id="CHEBI:18407"/>
        <dbReference type="ChEBI" id="CHEBI:38290"/>
        <dbReference type="ChEBI" id="CHEBI:58360"/>
        <dbReference type="ChEBI" id="CHEBI:58539"/>
        <dbReference type="EC" id="1.14.17.4"/>
    </reaction>
</comment>
<comment type="cofactor">
    <cofactor evidence="1">
        <name>Fe(2+)</name>
        <dbReference type="ChEBI" id="CHEBI:29033"/>
    </cofactor>
    <text evidence="1">Binds 1 Fe(2+) ion per subunit.</text>
</comment>
<comment type="pathway">
    <text>Alkene biosynthesis; ethylene biosynthesis via S-adenosyl-L-methionine; ethylene from S-adenosyl-L-methionine: step 2/2.</text>
</comment>
<comment type="similarity">
    <text evidence="4">Belongs to the iron/ascorbate-dependent oxidoreductase family.</text>
</comment>
<accession>Q76NT9</accession>
<accession>Q54ZN1</accession>